<feature type="chain" id="PRO_0000350943" description="Translation initiation factor eIF2 assembly protein">
    <location>
        <begin position="1"/>
        <end position="407"/>
    </location>
</feature>
<feature type="region of interest" description="Disordered" evidence="4">
    <location>
        <begin position="68"/>
        <end position="99"/>
    </location>
</feature>
<feature type="region of interest" description="Disordered" evidence="4">
    <location>
        <begin position="312"/>
        <end position="346"/>
    </location>
</feature>
<feature type="region of interest" description="Disordered" evidence="4">
    <location>
        <begin position="374"/>
        <end position="407"/>
    </location>
</feature>
<feature type="compositionally biased region" description="Acidic residues" evidence="4">
    <location>
        <begin position="77"/>
        <end position="92"/>
    </location>
</feature>
<feature type="compositionally biased region" description="Acidic residues" evidence="4">
    <location>
        <begin position="325"/>
        <end position="339"/>
    </location>
</feature>
<feature type="binding site" evidence="1">
    <location>
        <position position="119"/>
    </location>
    <ligand>
        <name>ATP</name>
        <dbReference type="ChEBI" id="CHEBI:30616"/>
    </ligand>
</feature>
<feature type="binding site" evidence="1">
    <location>
        <position position="122"/>
    </location>
    <ligand>
        <name>ATP</name>
        <dbReference type="ChEBI" id="CHEBI:30616"/>
    </ligand>
</feature>
<feature type="binding site" evidence="1">
    <location>
        <position position="124"/>
    </location>
    <ligand>
        <name>ATP</name>
        <dbReference type="ChEBI" id="CHEBI:30616"/>
    </ligand>
</feature>
<feature type="binding site" evidence="3">
    <location>
        <position position="126"/>
    </location>
    <ligand>
        <name>ATP</name>
        <dbReference type="ChEBI" id="CHEBI:30616"/>
    </ligand>
</feature>
<feature type="binding site" evidence="3">
    <location>
        <position position="190"/>
    </location>
    <ligand>
        <name>ATP</name>
        <dbReference type="ChEBI" id="CHEBI:30616"/>
    </ligand>
</feature>
<feature type="binding site" evidence="1">
    <location>
        <position position="191"/>
    </location>
    <ligand>
        <name>ATP</name>
        <dbReference type="ChEBI" id="CHEBI:30616"/>
    </ligand>
</feature>
<feature type="binding site" evidence="1">
    <location>
        <position position="200"/>
    </location>
    <ligand>
        <name>ATP</name>
        <dbReference type="ChEBI" id="CHEBI:30616"/>
    </ligand>
</feature>
<feature type="binding site" evidence="1">
    <location>
        <position position="202"/>
    </location>
    <ligand>
        <name>ATP</name>
        <dbReference type="ChEBI" id="CHEBI:30616"/>
    </ligand>
</feature>
<feature type="binding site" evidence="1">
    <location>
        <position position="216"/>
    </location>
    <ligand>
        <name>ATP</name>
        <dbReference type="ChEBI" id="CHEBI:30616"/>
    </ligand>
</feature>
<feature type="binding site" evidence="3">
    <location>
        <position position="255"/>
    </location>
    <ligand>
        <name>ATP</name>
        <dbReference type="ChEBI" id="CHEBI:30616"/>
    </ligand>
</feature>
<feature type="binding site" evidence="1">
    <location>
        <position position="269"/>
    </location>
    <ligand>
        <name>ATP</name>
        <dbReference type="ChEBI" id="CHEBI:30616"/>
    </ligand>
</feature>
<feature type="binding site" evidence="1">
    <location>
        <position position="269"/>
    </location>
    <ligand>
        <name>Mg(2+)</name>
        <dbReference type="ChEBI" id="CHEBI:18420"/>
    </ligand>
</feature>
<feature type="binding site" evidence="1">
    <location>
        <position position="271"/>
    </location>
    <ligand>
        <name>ATP</name>
        <dbReference type="ChEBI" id="CHEBI:30616"/>
    </ligand>
</feature>
<feature type="binding site" evidence="1">
    <location>
        <position position="271"/>
    </location>
    <ligand>
        <name>Mg(2+)</name>
        <dbReference type="ChEBI" id="CHEBI:18420"/>
    </ligand>
</feature>
<reference key="1">
    <citation type="journal article" date="2005" name="Nature">
        <title>Sequencing of Aspergillus nidulans and comparative analysis with A. fumigatus and A. oryzae.</title>
        <authorList>
            <person name="Galagan J.E."/>
            <person name="Calvo S.E."/>
            <person name="Cuomo C."/>
            <person name="Ma L.-J."/>
            <person name="Wortman J.R."/>
            <person name="Batzoglou S."/>
            <person name="Lee S.-I."/>
            <person name="Bastuerkmen M."/>
            <person name="Spevak C.C."/>
            <person name="Clutterbuck J."/>
            <person name="Kapitonov V."/>
            <person name="Jurka J."/>
            <person name="Scazzocchio C."/>
            <person name="Farman M.L."/>
            <person name="Butler J."/>
            <person name="Purcell S."/>
            <person name="Harris S."/>
            <person name="Braus G.H."/>
            <person name="Draht O."/>
            <person name="Busch S."/>
            <person name="D'Enfert C."/>
            <person name="Bouchier C."/>
            <person name="Goldman G.H."/>
            <person name="Bell-Pedersen D."/>
            <person name="Griffiths-Jones S."/>
            <person name="Doonan J.H."/>
            <person name="Yu J."/>
            <person name="Vienken K."/>
            <person name="Pain A."/>
            <person name="Freitag M."/>
            <person name="Selker E.U."/>
            <person name="Archer D.B."/>
            <person name="Penalva M.A."/>
            <person name="Oakley B.R."/>
            <person name="Momany M."/>
            <person name="Tanaka T."/>
            <person name="Kumagai T."/>
            <person name="Asai K."/>
            <person name="Machida M."/>
            <person name="Nierman W.C."/>
            <person name="Denning D.W."/>
            <person name="Caddick M.X."/>
            <person name="Hynes M."/>
            <person name="Paoletti M."/>
            <person name="Fischer R."/>
            <person name="Miller B.L."/>
            <person name="Dyer P.S."/>
            <person name="Sachs M.S."/>
            <person name="Osmani S.A."/>
            <person name="Birren B.W."/>
        </authorList>
    </citation>
    <scope>NUCLEOTIDE SEQUENCE [LARGE SCALE GENOMIC DNA]</scope>
    <source>
        <strain>FGSC A4 / ATCC 38163 / CBS 112.46 / NRRL 194 / M139</strain>
    </source>
</reference>
<reference key="2">
    <citation type="journal article" date="2009" name="Fungal Genet. Biol.">
        <title>The 2008 update of the Aspergillus nidulans genome annotation: a community effort.</title>
        <authorList>
            <person name="Wortman J.R."/>
            <person name="Gilsenan J.M."/>
            <person name="Joardar V."/>
            <person name="Deegan J."/>
            <person name="Clutterbuck J."/>
            <person name="Andersen M.R."/>
            <person name="Archer D."/>
            <person name="Bencina M."/>
            <person name="Braus G."/>
            <person name="Coutinho P."/>
            <person name="von Dohren H."/>
            <person name="Doonan J."/>
            <person name="Driessen A.J."/>
            <person name="Durek P."/>
            <person name="Espeso E."/>
            <person name="Fekete E."/>
            <person name="Flipphi M."/>
            <person name="Estrada C.G."/>
            <person name="Geysens S."/>
            <person name="Goldman G."/>
            <person name="de Groot P.W."/>
            <person name="Hansen K."/>
            <person name="Harris S.D."/>
            <person name="Heinekamp T."/>
            <person name="Helmstaedt K."/>
            <person name="Henrissat B."/>
            <person name="Hofmann G."/>
            <person name="Homan T."/>
            <person name="Horio T."/>
            <person name="Horiuchi H."/>
            <person name="James S."/>
            <person name="Jones M."/>
            <person name="Karaffa L."/>
            <person name="Karanyi Z."/>
            <person name="Kato M."/>
            <person name="Keller N."/>
            <person name="Kelly D.E."/>
            <person name="Kiel J.A."/>
            <person name="Kim J.M."/>
            <person name="van der Klei I.J."/>
            <person name="Klis F.M."/>
            <person name="Kovalchuk A."/>
            <person name="Krasevec N."/>
            <person name="Kubicek C.P."/>
            <person name="Liu B."/>
            <person name="Maccabe A."/>
            <person name="Meyer V."/>
            <person name="Mirabito P."/>
            <person name="Miskei M."/>
            <person name="Mos M."/>
            <person name="Mullins J."/>
            <person name="Nelson D.R."/>
            <person name="Nielsen J."/>
            <person name="Oakley B.R."/>
            <person name="Osmani S.A."/>
            <person name="Pakula T."/>
            <person name="Paszewski A."/>
            <person name="Paulsen I."/>
            <person name="Pilsyk S."/>
            <person name="Pocsi I."/>
            <person name="Punt P.J."/>
            <person name="Ram A.F."/>
            <person name="Ren Q."/>
            <person name="Robellet X."/>
            <person name="Robson G."/>
            <person name="Seiboth B."/>
            <person name="van Solingen P."/>
            <person name="Specht T."/>
            <person name="Sun J."/>
            <person name="Taheri-Talesh N."/>
            <person name="Takeshita N."/>
            <person name="Ussery D."/>
            <person name="vanKuyk P.A."/>
            <person name="Visser H."/>
            <person name="van de Vondervoort P.J."/>
            <person name="de Vries R.P."/>
            <person name="Walton J."/>
            <person name="Xiang X."/>
            <person name="Xiong Y."/>
            <person name="Zeng A.P."/>
            <person name="Brandt B.W."/>
            <person name="Cornell M.J."/>
            <person name="van den Hondel C.A."/>
            <person name="Visser J."/>
            <person name="Oliver S.G."/>
            <person name="Turner G."/>
        </authorList>
    </citation>
    <scope>GENOME REANNOTATION</scope>
    <source>
        <strain>FGSC A4 / ATCC 38163 / CBS 112.46 / NRRL 194 / M139</strain>
    </source>
</reference>
<comment type="function">
    <text evidence="2">ATP-dependent protein-folding chaperone for the eIF2 complex. Binds to the gamma subunit of the eIF2 complex which allows the subunit to assemble with the alpha and beta subunits.</text>
</comment>
<comment type="subcellular location">
    <subcellularLocation>
        <location evidence="2">Cytoplasm</location>
    </subcellularLocation>
</comment>
<comment type="similarity">
    <text evidence="5">Belongs to the CDC123 family.</text>
</comment>
<accession>Q5AYN6</accession>
<accession>C8V129</accession>
<keyword id="KW-0067">ATP-binding</keyword>
<keyword id="KW-0143">Chaperone</keyword>
<keyword id="KW-0963">Cytoplasm</keyword>
<keyword id="KW-0460">Magnesium</keyword>
<keyword id="KW-0479">Metal-binding</keyword>
<keyword id="KW-0547">Nucleotide-binding</keyword>
<keyword id="KW-1185">Reference proteome</keyword>
<proteinExistence type="inferred from homology"/>
<gene>
    <name type="primary">cdc123</name>
    <name type="ORF">AN6594</name>
</gene>
<sequence length="407" mass="46623">MPLIESDATGSPTDQLQRLPFPPVTYSHILHCSYDYWQPKYRALTPKSRIIPLTSSFVSYLHADGIVLPPENTPPTNDDDDFSDDPDAEEEADPSKDWPEVHAQIKSAIAELDGKVTPKLNWSAPKDATWMAATNDLQCRTPNDIYLLLKSSDFITHDLEHPFDDCVPDTSYSPAPISTPPEVKYNLVLRKYVNFNPSLEFRCFVRNRILLCICQRDQNHFDFLFELRDTLRSRIQSFFDEKLKDSFPDSSFVFDVYIPAPHQRVWLIDINPWAERTDPLLFSWLEILRMKDPIGIQEEDDSAEEQFVRLSLNGHSNGDQKPESESESEEEVEKAEDDAPLLPEFRLVKRDDPEAYSFTTPQYSAHKLPKEVVDASMTGPGGMSEFLGQWQDILSRQGQESDTESDN</sequence>
<name>CD123_EMENI</name>
<protein>
    <recommendedName>
        <fullName evidence="5">Translation initiation factor eIF2 assembly protein</fullName>
    </recommendedName>
    <alternativeName>
        <fullName>Cell division cycle protein 123</fullName>
    </alternativeName>
</protein>
<organism>
    <name type="scientific">Emericella nidulans (strain FGSC A4 / ATCC 38163 / CBS 112.46 / NRRL 194 / M139)</name>
    <name type="common">Aspergillus nidulans</name>
    <dbReference type="NCBI Taxonomy" id="227321"/>
    <lineage>
        <taxon>Eukaryota</taxon>
        <taxon>Fungi</taxon>
        <taxon>Dikarya</taxon>
        <taxon>Ascomycota</taxon>
        <taxon>Pezizomycotina</taxon>
        <taxon>Eurotiomycetes</taxon>
        <taxon>Eurotiomycetidae</taxon>
        <taxon>Eurotiales</taxon>
        <taxon>Aspergillaceae</taxon>
        <taxon>Aspergillus</taxon>
        <taxon>Aspergillus subgen. Nidulantes</taxon>
    </lineage>
</organism>
<dbReference type="EMBL" id="AACD01000110">
    <property type="protein sequence ID" value="EAA58123.1"/>
    <property type="molecule type" value="Genomic_DNA"/>
</dbReference>
<dbReference type="EMBL" id="BN001301">
    <property type="protein sequence ID" value="CBF71058.1"/>
    <property type="molecule type" value="Genomic_DNA"/>
</dbReference>
<dbReference type="RefSeq" id="XP_664198.1">
    <property type="nucleotide sequence ID" value="XM_659106.1"/>
</dbReference>
<dbReference type="SMR" id="Q5AYN6"/>
<dbReference type="FunCoup" id="Q5AYN6">
    <property type="interactions" value="720"/>
</dbReference>
<dbReference type="STRING" id="227321.Q5AYN6"/>
<dbReference type="EnsemblFungi" id="CBF71058">
    <property type="protein sequence ID" value="CBF71058"/>
    <property type="gene ID" value="ANIA_06594"/>
</dbReference>
<dbReference type="KEGG" id="ani:ANIA_06594"/>
<dbReference type="VEuPathDB" id="FungiDB:AN6594"/>
<dbReference type="eggNOG" id="KOG2983">
    <property type="taxonomic scope" value="Eukaryota"/>
</dbReference>
<dbReference type="HOGENOM" id="CLU_034402_2_0_1"/>
<dbReference type="InParanoid" id="Q5AYN6"/>
<dbReference type="OMA" id="TFPDPNF"/>
<dbReference type="OrthoDB" id="360540at2759"/>
<dbReference type="Proteomes" id="UP000000560">
    <property type="component" value="Chromosome I"/>
</dbReference>
<dbReference type="GO" id="GO:0005737">
    <property type="term" value="C:cytoplasm"/>
    <property type="evidence" value="ECO:0000250"/>
    <property type="project" value="UniProtKB"/>
</dbReference>
<dbReference type="GO" id="GO:0005524">
    <property type="term" value="F:ATP binding"/>
    <property type="evidence" value="ECO:0000250"/>
    <property type="project" value="UniProtKB"/>
</dbReference>
<dbReference type="GO" id="GO:0000287">
    <property type="term" value="F:magnesium ion binding"/>
    <property type="evidence" value="ECO:0000250"/>
    <property type="project" value="UniProtKB"/>
</dbReference>
<dbReference type="GO" id="GO:0044183">
    <property type="term" value="F:protein folding chaperone"/>
    <property type="evidence" value="ECO:0000250"/>
    <property type="project" value="UniProtKB"/>
</dbReference>
<dbReference type="GO" id="GO:1905143">
    <property type="term" value="P:eukaryotic translation initiation factor 2 complex assembly"/>
    <property type="evidence" value="ECO:0000250"/>
    <property type="project" value="UniProtKB"/>
</dbReference>
<dbReference type="InterPro" id="IPR009772">
    <property type="entry name" value="CDC123"/>
</dbReference>
<dbReference type="PANTHER" id="PTHR15323:SF6">
    <property type="entry name" value="CELL DIVISION CYCLE PROTEIN 123 HOMOLOG"/>
    <property type="match status" value="1"/>
</dbReference>
<dbReference type="PANTHER" id="PTHR15323">
    <property type="entry name" value="D123 PROTEIN"/>
    <property type="match status" value="1"/>
</dbReference>
<dbReference type="Pfam" id="PF07065">
    <property type="entry name" value="D123"/>
    <property type="match status" value="1"/>
</dbReference>
<evidence type="ECO:0000250" key="1">
    <source>
        <dbReference type="UniProtKB" id="O75794"/>
    </source>
</evidence>
<evidence type="ECO:0000250" key="2">
    <source>
        <dbReference type="UniProtKB" id="Q05791"/>
    </source>
</evidence>
<evidence type="ECO:0000250" key="3">
    <source>
        <dbReference type="UniProtKB" id="Q9P7N5"/>
    </source>
</evidence>
<evidence type="ECO:0000256" key="4">
    <source>
        <dbReference type="SAM" id="MobiDB-lite"/>
    </source>
</evidence>
<evidence type="ECO:0000305" key="5"/>